<organism>
    <name type="scientific">Anopheles gambiae</name>
    <name type="common">African malaria mosquito</name>
    <dbReference type="NCBI Taxonomy" id="7165"/>
    <lineage>
        <taxon>Eukaryota</taxon>
        <taxon>Metazoa</taxon>
        <taxon>Ecdysozoa</taxon>
        <taxon>Arthropoda</taxon>
        <taxon>Hexapoda</taxon>
        <taxon>Insecta</taxon>
        <taxon>Pterygota</taxon>
        <taxon>Neoptera</taxon>
        <taxon>Endopterygota</taxon>
        <taxon>Diptera</taxon>
        <taxon>Nematocera</taxon>
        <taxon>Culicoidea</taxon>
        <taxon>Culicidae</taxon>
        <taxon>Anophelinae</taxon>
        <taxon>Anopheles</taxon>
    </lineage>
</organism>
<feature type="signal peptide" evidence="2">
    <location>
        <begin position="1"/>
        <end position="18"/>
    </location>
</feature>
<feature type="propeptide" id="PRO_0000028249" description="Activation peptide">
    <location>
        <begin position="19"/>
        <end position="48"/>
    </location>
</feature>
<feature type="chain" id="PRO_0000028250" description="Trypsin-4">
    <location>
        <begin position="49"/>
        <end position="275"/>
    </location>
</feature>
<feature type="domain" description="Peptidase S1" evidence="3">
    <location>
        <begin position="49"/>
        <end position="274"/>
    </location>
</feature>
<feature type="active site" description="Charge relay system" evidence="1">
    <location>
        <position position="89"/>
    </location>
</feature>
<feature type="active site" description="Charge relay system" evidence="1">
    <location>
        <position position="134"/>
    </location>
</feature>
<feature type="active site" description="Charge relay system" evidence="1">
    <location>
        <position position="230"/>
    </location>
</feature>
<feature type="site" description="Required for specificity" evidence="1">
    <location>
        <position position="224"/>
    </location>
</feature>
<feature type="disulfide bond" evidence="3">
    <location>
        <begin position="74"/>
        <end position="90"/>
    </location>
</feature>
<feature type="disulfide bond" evidence="3">
    <location>
        <begin position="199"/>
        <end position="215"/>
    </location>
</feature>
<feature type="disulfide bond" evidence="3">
    <location>
        <begin position="226"/>
        <end position="250"/>
    </location>
</feature>
<feature type="sequence conflict" description="In Ref. 1; CAA80515." evidence="5" ref="1">
    <original>A</original>
    <variation>E</variation>
    <location>
        <position position="97"/>
    </location>
</feature>
<feature type="sequence conflict" description="In Ref. 1; CAA80515." evidence="5" ref="1">
    <original>A</original>
    <variation>T</variation>
    <location>
        <position position="154"/>
    </location>
</feature>
<proteinExistence type="evidence at transcript level"/>
<evidence type="ECO:0000250" key="1"/>
<evidence type="ECO:0000255" key="2"/>
<evidence type="ECO:0000255" key="3">
    <source>
        <dbReference type="PROSITE-ProRule" id="PRU00274"/>
    </source>
</evidence>
<evidence type="ECO:0000269" key="4">
    <source>
    </source>
</evidence>
<evidence type="ECO:0000305" key="5"/>
<keyword id="KW-0222">Digestion</keyword>
<keyword id="KW-1015">Disulfide bond</keyword>
<keyword id="KW-0378">Hydrolase</keyword>
<keyword id="KW-0645">Protease</keyword>
<keyword id="KW-1185">Reference proteome</keyword>
<keyword id="KW-0964">Secreted</keyword>
<keyword id="KW-0720">Serine protease</keyword>
<keyword id="KW-0732">Signal</keyword>
<keyword id="KW-0865">Zymogen</keyword>
<dbReference type="EC" id="3.4.21.4"/>
<dbReference type="EMBL" id="Z22930">
    <property type="protein sequence ID" value="CAA80515.1"/>
    <property type="molecule type" value="Genomic_DNA"/>
</dbReference>
<dbReference type="EMBL" id="AAAB01008964">
    <property type="protein sequence ID" value="EAA12264.2"/>
    <property type="molecule type" value="Genomic_DNA"/>
</dbReference>
<dbReference type="PIR" id="S40005">
    <property type="entry name" value="S40005"/>
</dbReference>
<dbReference type="RefSeq" id="XP_317173.2">
    <property type="nucleotide sequence ID" value="XM_317173.3"/>
</dbReference>
<dbReference type="SMR" id="P35038"/>
<dbReference type="FunCoup" id="P35038">
    <property type="interactions" value="55"/>
</dbReference>
<dbReference type="MEROPS" id="S01.130"/>
<dbReference type="PaxDb" id="7165-AGAP008292-PA"/>
<dbReference type="EnsemblMetazoa" id="AGAP008292-RA">
    <property type="protein sequence ID" value="AGAP008292-PA"/>
    <property type="gene ID" value="AGAP008292"/>
</dbReference>
<dbReference type="GeneID" id="1277690"/>
<dbReference type="KEGG" id="aga:1277690"/>
<dbReference type="VEuPathDB" id="VectorBase:AGAMI1_015134"/>
<dbReference type="VEuPathDB" id="VectorBase:AGAP008292"/>
<dbReference type="eggNOG" id="KOG3627">
    <property type="taxonomic scope" value="Eukaryota"/>
</dbReference>
<dbReference type="HOGENOM" id="CLU_006842_7_0_1"/>
<dbReference type="InParanoid" id="P35038"/>
<dbReference type="OMA" id="GFQIDIA"/>
<dbReference type="OrthoDB" id="6432550at2759"/>
<dbReference type="PhylomeDB" id="P35038"/>
<dbReference type="Proteomes" id="UP000007062">
    <property type="component" value="Chromosome 3R"/>
</dbReference>
<dbReference type="GO" id="GO:0005576">
    <property type="term" value="C:extracellular region"/>
    <property type="evidence" value="ECO:0007669"/>
    <property type="project" value="UniProtKB-SubCell"/>
</dbReference>
<dbReference type="GO" id="GO:0004252">
    <property type="term" value="F:serine-type endopeptidase activity"/>
    <property type="evidence" value="ECO:0000318"/>
    <property type="project" value="GO_Central"/>
</dbReference>
<dbReference type="GO" id="GO:0007586">
    <property type="term" value="P:digestion"/>
    <property type="evidence" value="ECO:0007669"/>
    <property type="project" value="UniProtKB-KW"/>
</dbReference>
<dbReference type="GO" id="GO:0006508">
    <property type="term" value="P:proteolysis"/>
    <property type="evidence" value="ECO:0007669"/>
    <property type="project" value="UniProtKB-KW"/>
</dbReference>
<dbReference type="CDD" id="cd00190">
    <property type="entry name" value="Tryp_SPc"/>
    <property type="match status" value="1"/>
</dbReference>
<dbReference type="FunFam" id="2.40.10.10:FF:000077">
    <property type="entry name" value="Predicted protein"/>
    <property type="match status" value="1"/>
</dbReference>
<dbReference type="Gene3D" id="2.40.10.10">
    <property type="entry name" value="Trypsin-like serine proteases"/>
    <property type="match status" value="1"/>
</dbReference>
<dbReference type="InterPro" id="IPR050430">
    <property type="entry name" value="Peptidase_S1"/>
</dbReference>
<dbReference type="InterPro" id="IPR009003">
    <property type="entry name" value="Peptidase_S1_PA"/>
</dbReference>
<dbReference type="InterPro" id="IPR043504">
    <property type="entry name" value="Peptidase_S1_PA_chymotrypsin"/>
</dbReference>
<dbReference type="InterPro" id="IPR001314">
    <property type="entry name" value="Peptidase_S1A"/>
</dbReference>
<dbReference type="InterPro" id="IPR001254">
    <property type="entry name" value="Trypsin_dom"/>
</dbReference>
<dbReference type="InterPro" id="IPR018114">
    <property type="entry name" value="TRYPSIN_HIS"/>
</dbReference>
<dbReference type="InterPro" id="IPR033116">
    <property type="entry name" value="TRYPSIN_SER"/>
</dbReference>
<dbReference type="PANTHER" id="PTHR24276:SF97">
    <property type="entry name" value="GH13245P2-RELATED"/>
    <property type="match status" value="1"/>
</dbReference>
<dbReference type="PANTHER" id="PTHR24276">
    <property type="entry name" value="POLYSERASE-RELATED"/>
    <property type="match status" value="1"/>
</dbReference>
<dbReference type="Pfam" id="PF00089">
    <property type="entry name" value="Trypsin"/>
    <property type="match status" value="1"/>
</dbReference>
<dbReference type="PRINTS" id="PR00722">
    <property type="entry name" value="CHYMOTRYPSIN"/>
</dbReference>
<dbReference type="SMART" id="SM00020">
    <property type="entry name" value="Tryp_SPc"/>
    <property type="match status" value="1"/>
</dbReference>
<dbReference type="SUPFAM" id="SSF50494">
    <property type="entry name" value="Trypsin-like serine proteases"/>
    <property type="match status" value="1"/>
</dbReference>
<dbReference type="PROSITE" id="PS50240">
    <property type="entry name" value="TRYPSIN_DOM"/>
    <property type="match status" value="1"/>
</dbReference>
<dbReference type="PROSITE" id="PS00134">
    <property type="entry name" value="TRYPSIN_HIS"/>
    <property type="match status" value="1"/>
</dbReference>
<dbReference type="PROSITE" id="PS00135">
    <property type="entry name" value="TRYPSIN_SER"/>
    <property type="match status" value="1"/>
</dbReference>
<gene>
    <name type="primary">TRYP4</name>
    <name type="ORF">AGAP008292</name>
</gene>
<accession>P35038</accession>
<accession>Q7Q494</accession>
<name>TRY4_ANOGA</name>
<sequence length="275" mass="29608">MSNKITILLAVLLAVVACAQAHASHQRRVPYPLPRFLPRPHHTVSNHRIVGGFEIDVAETPYQVSLQRSKRHICGGSVLSGKWILTAAHCTDGSQPASLTVRLGSSRHASGGSVIHVARIVQHPDYDQETIDYDYSLLELESVLTFSNKVQPIALPEQDEAVEDGIMTIVSGWGSTKSAIESNAILRAANVPTVNQDECNQAYHKSEGITERMLCAGYQQGGKDACQGDSGGPLVAEDKLIGVVSWGAGCAQPGYPGVYARVAVVRDWIRETCGV</sequence>
<comment type="function">
    <text evidence="4">Constitutive trypsin that is expressed 2 days after emergence, coinciding with host seeking behavior of the female.</text>
</comment>
<comment type="catalytic activity">
    <reaction>
        <text>Preferential cleavage: Arg-|-Xaa, Lys-|-Xaa.</text>
        <dbReference type="EC" id="3.4.21.4"/>
    </reaction>
</comment>
<comment type="subcellular location">
    <subcellularLocation>
        <location evidence="4">Secreted</location>
    </subcellularLocation>
</comment>
<comment type="tissue specificity">
    <text evidence="4">Expressed in the midgut. Expression levels drop a few hours after blood feeding and pick up again 28 hours later.</text>
</comment>
<comment type="similarity">
    <text evidence="3">Belongs to the peptidase S1 family.</text>
</comment>
<protein>
    <recommendedName>
        <fullName>Trypsin-4</fullName>
        <ecNumber>3.4.21.4</ecNumber>
    </recommendedName>
</protein>
<reference key="1">
    <citation type="journal article" date="1995" name="Exp. Parasitol.">
        <title>Constitutive and blood meal-induced trypsin genes in Anopheles gambiae.</title>
        <authorList>
            <person name="Mueller H.-M."/>
            <person name="Catteruccia F."/>
            <person name="Vizioli J."/>
            <person name="della Torre A."/>
            <person name="Crisanti A."/>
        </authorList>
    </citation>
    <scope>NUCLEOTIDE SEQUENCE [GENOMIC DNA]</scope>
    <scope>FUNCTION</scope>
    <scope>SUBCELLULAR LOCATION</scope>
    <scope>TISSUE SPECIFICITY</scope>
    <source>
        <strain>Suakoko</strain>
        <tissue>Midgut</tissue>
    </source>
</reference>
<reference key="2">
    <citation type="journal article" date="2002" name="Science">
        <title>The genome sequence of the malaria mosquito Anopheles gambiae.</title>
        <authorList>
            <person name="Holt R.A."/>
            <person name="Subramanian G.M."/>
            <person name="Halpern A."/>
            <person name="Sutton G.G."/>
            <person name="Charlab R."/>
            <person name="Nusskern D.R."/>
            <person name="Wincker P."/>
            <person name="Clark A.G."/>
            <person name="Ribeiro J.M.C."/>
            <person name="Wides R."/>
            <person name="Salzberg S.L."/>
            <person name="Loftus B.J."/>
            <person name="Yandell M.D."/>
            <person name="Majoros W.H."/>
            <person name="Rusch D.B."/>
            <person name="Lai Z."/>
            <person name="Kraft C.L."/>
            <person name="Abril J.F."/>
            <person name="Anthouard V."/>
            <person name="Arensburger P."/>
            <person name="Atkinson P.W."/>
            <person name="Baden H."/>
            <person name="de Berardinis V."/>
            <person name="Baldwin D."/>
            <person name="Benes V."/>
            <person name="Biedler J."/>
            <person name="Blass C."/>
            <person name="Bolanos R."/>
            <person name="Boscus D."/>
            <person name="Barnstead M."/>
            <person name="Cai S."/>
            <person name="Center A."/>
            <person name="Chaturverdi K."/>
            <person name="Christophides G.K."/>
            <person name="Chrystal M.A.M."/>
            <person name="Clamp M."/>
            <person name="Cravchik A."/>
            <person name="Curwen V."/>
            <person name="Dana A."/>
            <person name="Delcher A."/>
            <person name="Dew I."/>
            <person name="Evans C.A."/>
            <person name="Flanigan M."/>
            <person name="Grundschober-Freimoser A."/>
            <person name="Friedli L."/>
            <person name="Gu Z."/>
            <person name="Guan P."/>
            <person name="Guigo R."/>
            <person name="Hillenmeyer M.E."/>
            <person name="Hladun S.L."/>
            <person name="Hogan J.R."/>
            <person name="Hong Y.S."/>
            <person name="Hoover J."/>
            <person name="Jaillon O."/>
            <person name="Ke Z."/>
            <person name="Kodira C.D."/>
            <person name="Kokoza E."/>
            <person name="Koutsos A."/>
            <person name="Letunic I."/>
            <person name="Levitsky A.A."/>
            <person name="Liang Y."/>
            <person name="Lin J.-J."/>
            <person name="Lobo N.F."/>
            <person name="Lopez J.R."/>
            <person name="Malek J.A."/>
            <person name="McIntosh T.C."/>
            <person name="Meister S."/>
            <person name="Miller J.R."/>
            <person name="Mobarry C."/>
            <person name="Mongin E."/>
            <person name="Murphy S.D."/>
            <person name="O'Brochta D.A."/>
            <person name="Pfannkoch C."/>
            <person name="Qi R."/>
            <person name="Regier M.A."/>
            <person name="Remington K."/>
            <person name="Shao H."/>
            <person name="Sharakhova M.V."/>
            <person name="Sitter C.D."/>
            <person name="Shetty J."/>
            <person name="Smith T.J."/>
            <person name="Strong R."/>
            <person name="Sun J."/>
            <person name="Thomasova D."/>
            <person name="Ton L.Q."/>
            <person name="Topalis P."/>
            <person name="Tu Z.J."/>
            <person name="Unger M.F."/>
            <person name="Walenz B."/>
            <person name="Wang A.H."/>
            <person name="Wang J."/>
            <person name="Wang M."/>
            <person name="Wang X."/>
            <person name="Woodford K.J."/>
            <person name="Wortman J.R."/>
            <person name="Wu M."/>
            <person name="Yao A."/>
            <person name="Zdobnov E.M."/>
            <person name="Zhang H."/>
            <person name="Zhao Q."/>
            <person name="Zhao S."/>
            <person name="Zhu S.C."/>
            <person name="Zhimulev I."/>
            <person name="Coluzzi M."/>
            <person name="della Torre A."/>
            <person name="Roth C.W."/>
            <person name="Louis C."/>
            <person name="Kalush F."/>
            <person name="Mural R.J."/>
            <person name="Myers E.W."/>
            <person name="Adams M.D."/>
            <person name="Smith H.O."/>
            <person name="Broder S."/>
            <person name="Gardner M.J."/>
            <person name="Fraser C.M."/>
            <person name="Birney E."/>
            <person name="Bork P."/>
            <person name="Brey P.T."/>
            <person name="Venter J.C."/>
            <person name="Weissenbach J."/>
            <person name="Kafatos F.C."/>
            <person name="Collins F.H."/>
            <person name="Hoffman S.L."/>
        </authorList>
    </citation>
    <scope>NUCLEOTIDE SEQUENCE [LARGE SCALE GENOMIC DNA]</scope>
    <source>
        <strain>PEST</strain>
    </source>
</reference>